<dbReference type="RefSeq" id="XP_051684611.1">
    <property type="nucleotide sequence ID" value="XM_051828651.2"/>
</dbReference>
<dbReference type="RefSeq" id="XP_069907733.1">
    <property type="nucleotide sequence ID" value="XM_070051632.1"/>
</dbReference>
<dbReference type="PDB" id="3JAG">
    <property type="method" value="EM"/>
    <property type="resolution" value="3.65 A"/>
    <property type="chains" value="VV=1-57"/>
</dbReference>
<dbReference type="PDB" id="3JAH">
    <property type="method" value="EM"/>
    <property type="resolution" value="3.45 A"/>
    <property type="chains" value="VV=1-57"/>
</dbReference>
<dbReference type="PDB" id="3JAI">
    <property type="method" value="EM"/>
    <property type="resolution" value="3.65 A"/>
    <property type="chains" value="VV=1-57"/>
</dbReference>
<dbReference type="PDB" id="4D5L">
    <property type="method" value="EM"/>
    <property type="resolution" value="9.00 A"/>
    <property type="chains" value="V=1-57"/>
</dbReference>
<dbReference type="PDB" id="4D61">
    <property type="method" value="EM"/>
    <property type="resolution" value="9.00 A"/>
    <property type="chains" value="V=1-57"/>
</dbReference>
<dbReference type="PDB" id="4KZX">
    <property type="method" value="X-ray"/>
    <property type="resolution" value="7.81 A"/>
    <property type="chains" value="V=1-57"/>
</dbReference>
<dbReference type="PDB" id="4KZY">
    <property type="method" value="X-ray"/>
    <property type="resolution" value="7.01 A"/>
    <property type="chains" value="V=1-57"/>
</dbReference>
<dbReference type="PDB" id="4KZZ">
    <property type="method" value="X-ray"/>
    <property type="resolution" value="7.03 A"/>
    <property type="chains" value="V=1-57"/>
</dbReference>
<dbReference type="PDB" id="5K0Y">
    <property type="method" value="EM"/>
    <property type="resolution" value="5.80 A"/>
    <property type="chains" value="b=1-57"/>
</dbReference>
<dbReference type="PDB" id="6D90">
    <property type="method" value="EM"/>
    <property type="resolution" value="3.20 A"/>
    <property type="chains" value="WW=1-57"/>
</dbReference>
<dbReference type="PDB" id="6P4G">
    <property type="method" value="EM"/>
    <property type="resolution" value="3.10 A"/>
    <property type="chains" value="W=1-57"/>
</dbReference>
<dbReference type="PDB" id="6P4H">
    <property type="method" value="EM"/>
    <property type="resolution" value="3.20 A"/>
    <property type="chains" value="W=1-57"/>
</dbReference>
<dbReference type="PDB" id="6P5I">
    <property type="method" value="EM"/>
    <property type="resolution" value="3.10 A"/>
    <property type="chains" value="W=1-57"/>
</dbReference>
<dbReference type="PDB" id="6P5J">
    <property type="method" value="EM"/>
    <property type="resolution" value="3.10 A"/>
    <property type="chains" value="W=1-57"/>
</dbReference>
<dbReference type="PDB" id="6P5K">
    <property type="method" value="EM"/>
    <property type="resolution" value="3.10 A"/>
    <property type="chains" value="W=1-57"/>
</dbReference>
<dbReference type="PDB" id="6P5N">
    <property type="method" value="EM"/>
    <property type="resolution" value="3.20 A"/>
    <property type="chains" value="W=1-57"/>
</dbReference>
<dbReference type="PDB" id="6YAL">
    <property type="method" value="EM"/>
    <property type="resolution" value="3.00 A"/>
    <property type="chains" value="X=1-57"/>
</dbReference>
<dbReference type="PDB" id="6YAM">
    <property type="method" value="EM"/>
    <property type="resolution" value="3.60 A"/>
    <property type="chains" value="X=1-57"/>
</dbReference>
<dbReference type="PDB" id="6YAN">
    <property type="method" value="EM"/>
    <property type="resolution" value="3.48 A"/>
    <property type="chains" value="X=1-57"/>
</dbReference>
<dbReference type="PDB" id="7MDZ">
    <property type="method" value="EM"/>
    <property type="resolution" value="3.20 A"/>
    <property type="chains" value="VV=1-57"/>
</dbReference>
<dbReference type="PDB" id="7SYG">
    <property type="method" value="EM"/>
    <property type="resolution" value="4.30 A"/>
    <property type="chains" value="W=1-57"/>
</dbReference>
<dbReference type="PDB" id="7SYH">
    <property type="method" value="EM"/>
    <property type="resolution" value="4.60 A"/>
    <property type="chains" value="W=1-57"/>
</dbReference>
<dbReference type="PDB" id="7SYI">
    <property type="method" value="EM"/>
    <property type="resolution" value="4.50 A"/>
    <property type="chains" value="W=1-57"/>
</dbReference>
<dbReference type="PDB" id="7SYJ">
    <property type="method" value="EM"/>
    <property type="resolution" value="4.80 A"/>
    <property type="chains" value="W=1-57"/>
</dbReference>
<dbReference type="PDB" id="7SYK">
    <property type="method" value="EM"/>
    <property type="resolution" value="4.20 A"/>
    <property type="chains" value="W=1-57"/>
</dbReference>
<dbReference type="PDB" id="7SYL">
    <property type="method" value="EM"/>
    <property type="resolution" value="4.50 A"/>
    <property type="chains" value="W=1-57"/>
</dbReference>
<dbReference type="PDB" id="7SYM">
    <property type="method" value="EM"/>
    <property type="resolution" value="4.80 A"/>
    <property type="chains" value="W=1-57"/>
</dbReference>
<dbReference type="PDB" id="7SYN">
    <property type="method" value="EM"/>
    <property type="resolution" value="4.00 A"/>
    <property type="chains" value="W=1-57"/>
</dbReference>
<dbReference type="PDB" id="7SYO">
    <property type="method" value="EM"/>
    <property type="resolution" value="4.60 A"/>
    <property type="chains" value="W=1-57"/>
</dbReference>
<dbReference type="PDB" id="7SYP">
    <property type="method" value="EM"/>
    <property type="resolution" value="4.00 A"/>
    <property type="chains" value="W=1-57"/>
</dbReference>
<dbReference type="PDB" id="7SYQ">
    <property type="method" value="EM"/>
    <property type="resolution" value="3.80 A"/>
    <property type="chains" value="W=1-57"/>
</dbReference>
<dbReference type="PDB" id="7SYR">
    <property type="method" value="EM"/>
    <property type="resolution" value="3.60 A"/>
    <property type="chains" value="W=1-57"/>
</dbReference>
<dbReference type="PDB" id="7SYS">
    <property type="method" value="EM"/>
    <property type="resolution" value="3.50 A"/>
    <property type="chains" value="W=1-57"/>
</dbReference>
<dbReference type="PDB" id="7SYT">
    <property type="method" value="EM"/>
    <property type="resolution" value="4.40 A"/>
    <property type="chains" value="W=1-57"/>
</dbReference>
<dbReference type="PDB" id="7SYU">
    <property type="method" value="EM"/>
    <property type="resolution" value="4.60 A"/>
    <property type="chains" value="W=1-57"/>
</dbReference>
<dbReference type="PDB" id="7SYV">
    <property type="method" value="EM"/>
    <property type="resolution" value="3.90 A"/>
    <property type="chains" value="W=1-57"/>
</dbReference>
<dbReference type="PDB" id="7SYW">
    <property type="method" value="EM"/>
    <property type="resolution" value="3.70 A"/>
    <property type="chains" value="W=1-57"/>
</dbReference>
<dbReference type="PDB" id="7TOQ">
    <property type="method" value="EM"/>
    <property type="resolution" value="3.10 A"/>
    <property type="chains" value="AS21=1-57"/>
</dbReference>
<dbReference type="PDB" id="7TOR">
    <property type="method" value="EM"/>
    <property type="resolution" value="2.90 A"/>
    <property type="chains" value="AS21=1-57"/>
</dbReference>
<dbReference type="PDB" id="7UCJ">
    <property type="method" value="EM"/>
    <property type="resolution" value="3.10 A"/>
    <property type="chains" value="VV=1-57"/>
</dbReference>
<dbReference type="PDB" id="7UCK">
    <property type="method" value="EM"/>
    <property type="resolution" value="2.80 A"/>
    <property type="chains" value="VV=1-57"/>
</dbReference>
<dbReference type="PDB" id="8BTK">
    <property type="method" value="EM"/>
    <property type="resolution" value="3.50 A"/>
    <property type="chains" value="Au=1-57"/>
</dbReference>
<dbReference type="PDB" id="8SCB">
    <property type="method" value="EM"/>
    <property type="resolution" value="2.50 A"/>
    <property type="chains" value="VV=24-80"/>
</dbReference>
<dbReference type="PDB" id="8VFT">
    <property type="method" value="EM"/>
    <property type="resolution" value="3.30 A"/>
    <property type="chains" value="VV=1-83"/>
</dbReference>
<dbReference type="PDB" id="9BDL">
    <property type="method" value="EM"/>
    <property type="resolution" value="2.80 A"/>
    <property type="chains" value="AS21=1-83"/>
</dbReference>
<dbReference type="PDB" id="9BDN">
    <property type="method" value="EM"/>
    <property type="resolution" value="3.10 A"/>
    <property type="chains" value="AS21=1-83"/>
</dbReference>
<dbReference type="PDB" id="9BDP">
    <property type="method" value="EM"/>
    <property type="resolution" value="3.70 A"/>
    <property type="chains" value="AS21=1-83"/>
</dbReference>
<dbReference type="PDB" id="9C8K">
    <property type="method" value="EM"/>
    <property type="resolution" value="3.10 A"/>
    <property type="chains" value="V=1-83"/>
</dbReference>
<dbReference type="PDB" id="9F1B">
    <property type="method" value="EM"/>
    <property type="resolution" value="3.01 A"/>
    <property type="chains" value="Au=1-83"/>
</dbReference>
<dbReference type="PDB" id="9F1C">
    <property type="method" value="EM"/>
    <property type="resolution" value="3.78 A"/>
    <property type="chains" value="Au=1-83"/>
</dbReference>
<dbReference type="PDB" id="9F1D">
    <property type="method" value="EM"/>
    <property type="resolution" value="3.26 A"/>
    <property type="chains" value="Au=1-83"/>
</dbReference>
<dbReference type="PDBsum" id="3JAG"/>
<dbReference type="PDBsum" id="3JAH"/>
<dbReference type="PDBsum" id="3JAI"/>
<dbReference type="PDBsum" id="4D5L"/>
<dbReference type="PDBsum" id="4D61"/>
<dbReference type="PDBsum" id="4KZX"/>
<dbReference type="PDBsum" id="4KZY"/>
<dbReference type="PDBsum" id="4KZZ"/>
<dbReference type="PDBsum" id="5K0Y"/>
<dbReference type="PDBsum" id="6D90"/>
<dbReference type="PDBsum" id="6P4G"/>
<dbReference type="PDBsum" id="6P4H"/>
<dbReference type="PDBsum" id="6P5I"/>
<dbReference type="PDBsum" id="6P5J"/>
<dbReference type="PDBsum" id="6P5K"/>
<dbReference type="PDBsum" id="6P5N"/>
<dbReference type="PDBsum" id="6YAL"/>
<dbReference type="PDBsum" id="6YAM"/>
<dbReference type="PDBsum" id="6YAN"/>
<dbReference type="PDBsum" id="7MDZ"/>
<dbReference type="PDBsum" id="7SYG"/>
<dbReference type="PDBsum" id="7SYH"/>
<dbReference type="PDBsum" id="7SYI"/>
<dbReference type="PDBsum" id="7SYJ"/>
<dbReference type="PDBsum" id="7SYK"/>
<dbReference type="PDBsum" id="7SYL"/>
<dbReference type="PDBsum" id="7SYM"/>
<dbReference type="PDBsum" id="7SYN"/>
<dbReference type="PDBsum" id="7SYO"/>
<dbReference type="PDBsum" id="7SYP"/>
<dbReference type="PDBsum" id="7SYQ"/>
<dbReference type="PDBsum" id="7SYR"/>
<dbReference type="PDBsum" id="7SYS"/>
<dbReference type="PDBsum" id="7SYT"/>
<dbReference type="PDBsum" id="7SYU"/>
<dbReference type="PDBsum" id="7SYV"/>
<dbReference type="PDBsum" id="7SYW"/>
<dbReference type="PDBsum" id="7TOQ"/>
<dbReference type="PDBsum" id="7TOR"/>
<dbReference type="PDBsum" id="7UCJ"/>
<dbReference type="PDBsum" id="7UCK"/>
<dbReference type="PDBsum" id="8BTK"/>
<dbReference type="PDBsum" id="8SCB"/>
<dbReference type="PDBsum" id="8VFT"/>
<dbReference type="PDBsum" id="9BDL"/>
<dbReference type="PDBsum" id="9BDN"/>
<dbReference type="PDBsum" id="9BDP"/>
<dbReference type="PDBsum" id="9C8K"/>
<dbReference type="PDBsum" id="9F1B"/>
<dbReference type="PDBsum" id="9F1C"/>
<dbReference type="PDBsum" id="9F1D"/>
<dbReference type="EMDB" id="EMD-0099"/>
<dbReference type="EMDB" id="EMD-0100"/>
<dbReference type="EMDB" id="EMD-0192"/>
<dbReference type="EMDB" id="EMD-0194"/>
<dbReference type="EMDB" id="EMD-0195"/>
<dbReference type="EMDB" id="EMD-0197"/>
<dbReference type="EMDB" id="EMD-10181"/>
<dbReference type="EMDB" id="EMD-10760"/>
<dbReference type="EMDB" id="EMD-10761"/>
<dbReference type="EMDB" id="EMD-10762"/>
<dbReference type="EMDB" id="EMD-12633"/>
<dbReference type="EMDB" id="EMD-16232"/>
<dbReference type="EMDB" id="EMD-20248"/>
<dbReference type="EMDB" id="EMD-20249"/>
<dbReference type="EMDB" id="EMD-20255"/>
<dbReference type="EMDB" id="EMD-20256"/>
<dbReference type="EMDB" id="EMD-20257"/>
<dbReference type="EMDB" id="EMD-20258"/>
<dbReference type="EMDB" id="EMD-21529"/>
<dbReference type="EMDB" id="EMD-21530"/>
<dbReference type="EMDB" id="EMD-22432"/>
<dbReference type="EMDB" id="EMD-22433"/>
<dbReference type="EMDB" id="EMD-23785"/>
<dbReference type="EMDB" id="EMD-25527"/>
<dbReference type="EMDB" id="EMD-25528"/>
<dbReference type="EMDB" id="EMD-25529"/>
<dbReference type="EMDB" id="EMD-25530"/>
<dbReference type="EMDB" id="EMD-25531"/>
<dbReference type="EMDB" id="EMD-25532"/>
<dbReference type="EMDB" id="EMD-25533"/>
<dbReference type="EMDB" id="EMD-25534"/>
<dbReference type="EMDB" id="EMD-25535"/>
<dbReference type="EMDB" id="EMD-25536"/>
<dbReference type="EMDB" id="EMD-25537"/>
<dbReference type="EMDB" id="EMD-25538"/>
<dbReference type="EMDB" id="EMD-25539"/>
<dbReference type="EMDB" id="EMD-25540"/>
<dbReference type="EMDB" id="EMD-25541"/>
<dbReference type="EMDB" id="EMD-25542"/>
<dbReference type="EMDB" id="EMD-25543"/>
<dbReference type="EMDB" id="EMD-25544"/>
<dbReference type="EMDB" id="EMD-26035"/>
<dbReference type="EMDB" id="EMD-26036"/>
<dbReference type="EMDB" id="EMD-26444"/>
<dbReference type="EMDB" id="EMD-26445"/>
<dbReference type="EMDB" id="EMD-40344"/>
<dbReference type="EMDB" id="EMD-4130"/>
<dbReference type="EMDB" id="EMD-4131"/>
<dbReference type="EMDB" id="EMD-4132"/>
<dbReference type="EMDB" id="EMD-4133"/>
<dbReference type="EMDB" id="EMD-4134"/>
<dbReference type="EMDB" id="EMD-4135"/>
<dbReference type="EMDB" id="EMD-4136"/>
<dbReference type="EMDB" id="EMD-4137"/>
<dbReference type="EMDB" id="EMD-43189"/>
<dbReference type="EMDB" id="EMD-44461"/>
<dbReference type="EMDB" id="EMD-44463"/>
<dbReference type="EMDB" id="EMD-44464"/>
<dbReference type="EMDB" id="EMD-45307"/>
<dbReference type="EMDB" id="EMD-4729"/>
<dbReference type="EMDB" id="EMD-4737"/>
<dbReference type="EMDB" id="EMD-4745"/>
<dbReference type="EMDB" id="EMD-50124"/>
<dbReference type="EMDB" id="EMD-50125"/>
<dbReference type="EMDB" id="EMD-50126"/>
<dbReference type="EMDB" id="EMD-7834"/>
<dbReference type="EMDB" id="EMD-7836"/>
<dbReference type="EMDB" id="EMD-8190"/>
<dbReference type="SMR" id="G1TM82"/>
<dbReference type="FunCoup" id="G1TM82">
    <property type="interactions" value="1185"/>
</dbReference>
<dbReference type="IntAct" id="G1TM82">
    <property type="interactions" value="1"/>
</dbReference>
<dbReference type="STRING" id="9986.ENSOCUP00000018090"/>
<dbReference type="PaxDb" id="9986-ENSOCUP00000018090"/>
<dbReference type="GeneID" id="127485544"/>
<dbReference type="eggNOG" id="KOG3486">
    <property type="taxonomic scope" value="Eukaryota"/>
</dbReference>
<dbReference type="HOGENOM" id="CLU_167122_2_0_1"/>
<dbReference type="InParanoid" id="G1TM82"/>
<dbReference type="TreeFam" id="TF300167"/>
<dbReference type="EvolutionaryTrace" id="G1TM82"/>
<dbReference type="Proteomes" id="UP000001811">
    <property type="component" value="Unplaced"/>
</dbReference>
<dbReference type="Bgee" id="ENSOCUG00000027307">
    <property type="expression patterns" value="Expressed in autopod skin and 17 other cell types or tissues"/>
</dbReference>
<dbReference type="GO" id="GO:0022626">
    <property type="term" value="C:cytosolic ribosome"/>
    <property type="evidence" value="ECO:0000314"/>
    <property type="project" value="UniProtKB"/>
</dbReference>
<dbReference type="GO" id="GO:1990904">
    <property type="term" value="C:ribonucleoprotein complex"/>
    <property type="evidence" value="ECO:0007669"/>
    <property type="project" value="UniProtKB-KW"/>
</dbReference>
<dbReference type="GO" id="GO:0005791">
    <property type="term" value="C:rough endoplasmic reticulum"/>
    <property type="evidence" value="ECO:0007669"/>
    <property type="project" value="UniProtKB-SubCell"/>
</dbReference>
<dbReference type="GO" id="GO:0003735">
    <property type="term" value="F:structural constituent of ribosome"/>
    <property type="evidence" value="ECO:0000314"/>
    <property type="project" value="UniProtKB"/>
</dbReference>
<dbReference type="GO" id="GO:0006412">
    <property type="term" value="P:translation"/>
    <property type="evidence" value="ECO:0007669"/>
    <property type="project" value="InterPro"/>
</dbReference>
<dbReference type="FunFam" id="3.30.1230.20:FF:000001">
    <property type="entry name" value="40S ribosomal protein S21"/>
    <property type="match status" value="1"/>
</dbReference>
<dbReference type="Gene3D" id="3.30.1230.20">
    <property type="match status" value="1"/>
</dbReference>
<dbReference type="InterPro" id="IPR001931">
    <property type="entry name" value="Ribosomal_eS21"/>
</dbReference>
<dbReference type="InterPro" id="IPR018279">
    <property type="entry name" value="Ribosomal_eS21_CS"/>
</dbReference>
<dbReference type="InterPro" id="IPR038579">
    <property type="entry name" value="Ribosomal_eS21_sf"/>
</dbReference>
<dbReference type="PANTHER" id="PTHR10442">
    <property type="entry name" value="40S RIBOSOMAL PROTEIN S21"/>
    <property type="match status" value="1"/>
</dbReference>
<dbReference type="Pfam" id="PF01249">
    <property type="entry name" value="Ribosomal_S21e"/>
    <property type="match status" value="1"/>
</dbReference>
<dbReference type="PIRSF" id="PIRSF002148">
    <property type="entry name" value="Ribosomal_S21e"/>
    <property type="match status" value="1"/>
</dbReference>
<dbReference type="PROSITE" id="PS00996">
    <property type="entry name" value="RIBOSOMAL_S21E"/>
    <property type="match status" value="1"/>
</dbReference>
<organism>
    <name type="scientific">Oryctolagus cuniculus</name>
    <name type="common">Rabbit</name>
    <dbReference type="NCBI Taxonomy" id="9986"/>
    <lineage>
        <taxon>Eukaryota</taxon>
        <taxon>Metazoa</taxon>
        <taxon>Chordata</taxon>
        <taxon>Craniata</taxon>
        <taxon>Vertebrata</taxon>
        <taxon>Euteleostomi</taxon>
        <taxon>Mammalia</taxon>
        <taxon>Eutheria</taxon>
        <taxon>Euarchontoglires</taxon>
        <taxon>Glires</taxon>
        <taxon>Lagomorpha</taxon>
        <taxon>Leporidae</taxon>
        <taxon>Oryctolagus</taxon>
    </lineage>
</organism>
<accession>G1TM82</accession>
<evidence type="ECO:0000250" key="1">
    <source>
        <dbReference type="UniProtKB" id="P63220"/>
    </source>
</evidence>
<evidence type="ECO:0000250" key="2">
    <source>
        <dbReference type="UniProtKB" id="P63221"/>
    </source>
</evidence>
<evidence type="ECO:0000269" key="3">
    <source>
    </source>
</evidence>
<evidence type="ECO:0000269" key="4">
    <source>
    </source>
</evidence>
<evidence type="ECO:0000269" key="5">
    <source>
    </source>
</evidence>
<evidence type="ECO:0000269" key="6">
    <source>
    </source>
</evidence>
<evidence type="ECO:0000269" key="7">
    <source>
    </source>
</evidence>
<evidence type="ECO:0000269" key="8">
    <source>
    </source>
</evidence>
<evidence type="ECO:0000269" key="9">
    <source>
    </source>
</evidence>
<evidence type="ECO:0000305" key="10"/>
<evidence type="ECO:0007744" key="11">
    <source>
        <dbReference type="PDB" id="3JAG"/>
    </source>
</evidence>
<evidence type="ECO:0007744" key="12">
    <source>
        <dbReference type="PDB" id="3JAH"/>
    </source>
</evidence>
<evidence type="ECO:0007744" key="13">
    <source>
        <dbReference type="PDB" id="4D5L"/>
    </source>
</evidence>
<evidence type="ECO:0007744" key="14">
    <source>
        <dbReference type="PDB" id="4D61"/>
    </source>
</evidence>
<evidence type="ECO:0007744" key="15">
    <source>
        <dbReference type="PDB" id="4KZX"/>
    </source>
</evidence>
<evidence type="ECO:0007744" key="16">
    <source>
        <dbReference type="PDB" id="4KZY"/>
    </source>
</evidence>
<evidence type="ECO:0007744" key="17">
    <source>
        <dbReference type="PDB" id="6D90"/>
    </source>
</evidence>
<evidence type="ECO:0007744" key="18">
    <source>
        <dbReference type="PDB" id="6P4G"/>
    </source>
</evidence>
<evidence type="ECO:0007744" key="19">
    <source>
        <dbReference type="PDB" id="6P4H"/>
    </source>
</evidence>
<evidence type="ECO:0007744" key="20">
    <source>
        <dbReference type="PDB" id="7SYI"/>
    </source>
</evidence>
<evidence type="ECO:0007744" key="21">
    <source>
        <dbReference type="PDB" id="7SYJ"/>
    </source>
</evidence>
<evidence type="ECO:0007744" key="22">
    <source>
        <dbReference type="PDB" id="7UCJ"/>
    </source>
</evidence>
<evidence type="ECO:0007744" key="23">
    <source>
        <dbReference type="PDB" id="7UCK"/>
    </source>
</evidence>
<evidence type="ECO:0007829" key="24">
    <source>
        <dbReference type="PDB" id="6P4G"/>
    </source>
</evidence>
<evidence type="ECO:0007829" key="25">
    <source>
        <dbReference type="PDB" id="6YAL"/>
    </source>
</evidence>
<protein>
    <recommendedName>
        <fullName>Small ribosomal subunit protein eS21</fullName>
    </recommendedName>
    <alternativeName>
        <fullName>40S ribosomal protein S21</fullName>
    </alternativeName>
</protein>
<keyword id="KW-0002">3D-structure</keyword>
<keyword id="KW-0007">Acetylation</keyword>
<keyword id="KW-0963">Cytoplasm</keyword>
<keyword id="KW-0256">Endoplasmic reticulum</keyword>
<keyword id="KW-1017">Isopeptide bond</keyword>
<keyword id="KW-1185">Reference proteome</keyword>
<keyword id="KW-0687">Ribonucleoprotein</keyword>
<keyword id="KW-0689">Ribosomal protein</keyword>
<keyword id="KW-0832">Ubl conjugation</keyword>
<reference key="1">
    <citation type="journal article" date="2011" name="Nature">
        <title>A high-resolution map of human evolutionary constraint using 29 mammals.</title>
        <authorList>
            <person name="Lindblad-Toh K."/>
            <person name="Garber M."/>
            <person name="Zuk O."/>
            <person name="Lin M.F."/>
            <person name="Parker B.J."/>
            <person name="Washietl S."/>
            <person name="Kheradpour P."/>
            <person name="Ernst J."/>
            <person name="Jordan G."/>
            <person name="Mauceli E."/>
            <person name="Ward L.D."/>
            <person name="Lowe C.B."/>
            <person name="Holloway A.K."/>
            <person name="Clamp M."/>
            <person name="Gnerre S."/>
            <person name="Alfoldi J."/>
            <person name="Beal K."/>
            <person name="Chang J."/>
            <person name="Clawson H."/>
            <person name="Cuff J."/>
            <person name="Di Palma F."/>
            <person name="Fitzgerald S."/>
            <person name="Flicek P."/>
            <person name="Guttman M."/>
            <person name="Hubisz M.J."/>
            <person name="Jaffe D.B."/>
            <person name="Jungreis I."/>
            <person name="Kent W.J."/>
            <person name="Kostka D."/>
            <person name="Lara M."/>
            <person name="Martins A.L."/>
            <person name="Massingham T."/>
            <person name="Moltke I."/>
            <person name="Raney B.J."/>
            <person name="Rasmussen M.D."/>
            <person name="Robinson J."/>
            <person name="Stark A."/>
            <person name="Vilella A.J."/>
            <person name="Wen J."/>
            <person name="Xie X."/>
            <person name="Zody M.C."/>
            <person name="Baldwin J."/>
            <person name="Bloom T."/>
            <person name="Chin C.W."/>
            <person name="Heiman D."/>
            <person name="Nicol R."/>
            <person name="Nusbaum C."/>
            <person name="Young S."/>
            <person name="Wilkinson J."/>
            <person name="Worley K.C."/>
            <person name="Kovar C.L."/>
            <person name="Muzny D.M."/>
            <person name="Gibbs R.A."/>
            <person name="Cree A."/>
            <person name="Dihn H.H."/>
            <person name="Fowler G."/>
            <person name="Jhangiani S."/>
            <person name="Joshi V."/>
            <person name="Lee S."/>
            <person name="Lewis L.R."/>
            <person name="Nazareth L.V."/>
            <person name="Okwuonu G."/>
            <person name="Santibanez J."/>
            <person name="Warren W.C."/>
            <person name="Mardis E.R."/>
            <person name="Weinstock G.M."/>
            <person name="Wilson R.K."/>
            <person name="Delehaunty K."/>
            <person name="Dooling D."/>
            <person name="Fronik C."/>
            <person name="Fulton L."/>
            <person name="Fulton B."/>
            <person name="Graves T."/>
            <person name="Minx P."/>
            <person name="Sodergren E."/>
            <person name="Birney E."/>
            <person name="Margulies E.H."/>
            <person name="Herrero J."/>
            <person name="Green E.D."/>
            <person name="Haussler D."/>
            <person name="Siepel A."/>
            <person name="Goldman N."/>
            <person name="Pollard K.S."/>
            <person name="Pedersen J.S."/>
            <person name="Lander E.S."/>
            <person name="Kellis M."/>
        </authorList>
    </citation>
    <scope>NUCLEOTIDE SEQUENCE [LARGE SCALE GENOMIC DNA]</scope>
    <source>
        <strain>Thorbecke</strain>
    </source>
</reference>
<reference evidence="15 16" key="2">
    <citation type="journal article" date="2013" name="Nature">
        <title>The initiation of mammalian protein synthesis and mRNA scanning mechanism.</title>
        <authorList>
            <person name="Lomakin I.B."/>
            <person name="Steitz T.A."/>
        </authorList>
    </citation>
    <scope>X-RAY CRYSTALLOGRAPHY (7.01 ANGSTROMS) OF 40S RIBOSOME</scope>
    <scope>FUNCTION</scope>
    <scope>SUBUNIT</scope>
    <scope>SUBCELLULAR LOCATION</scope>
</reference>
<reference evidence="13 14" key="3">
    <citation type="journal article" date="2015" name="Mol. Cell">
        <title>Cryo-EM of ribosomal 80S complexes with termination factors reveals the translocated cricket paralysis virus IRES.</title>
        <authorList>
            <person name="Muhs M."/>
            <person name="Hilal T."/>
            <person name="Mielke T."/>
            <person name="Skabkin M.A."/>
            <person name="Sanbonmatsu K.Y."/>
            <person name="Pestova T.V."/>
            <person name="Spahn C.M."/>
        </authorList>
    </citation>
    <scope>STRUCTURE BY ELECTRON MICROSCOPY (9.00 ANGSTROMS) OF RIBOSOME</scope>
    <scope>FUNCTION</scope>
    <scope>SUBUNIT</scope>
    <scope>SUBCELLULAR LOCATION</scope>
</reference>
<reference evidence="11 12" key="4">
    <citation type="journal article" date="2015" name="Nature">
        <title>Structural basis for stop codon recognition in eukaryotes.</title>
        <authorList>
            <person name="Brown A."/>
            <person name="Shao S."/>
            <person name="Murray J."/>
            <person name="Hegde R.S."/>
            <person name="Ramakrishnan V."/>
        </authorList>
    </citation>
    <scope>STRUCTURE BY ELECTRON MICROSCOPY (3.45 ANGSTROMS) OF 1-60 OF RIBOSOME</scope>
    <scope>FUNCTION</scope>
    <scope>SUBCELLULAR LOCATION</scope>
    <scope>SUBUNIT</scope>
</reference>
<reference evidence="17" key="5">
    <citation type="journal article" date="2018" name="Elife">
        <title>Dual tRNA mimicry in the Cricket paralysis virus IRES uncovers an unexpected similarity with the Hepatitis C Virus IRES.</title>
        <authorList>
            <person name="Pisareva V.P."/>
            <person name="Pisarev A.V."/>
            <person name="Fernandez I.S."/>
        </authorList>
    </citation>
    <scope>STRUCTURE BY ELECTRON MICROSCOPY (3.20 ANGSTROMS) OF RIBOSOME</scope>
    <scope>SUBCELLULAR LOCATION</scope>
    <scope>SUBUNIT</scope>
</reference>
<reference evidence="18 19" key="6">
    <citation type="journal article" date="2019" name="EMBO J.">
        <title>The Israeli acute paralysis virus IRES captures host ribosomes by mimicking a ribosomal state with hybrid tRNAs.</title>
        <authorList>
            <person name="Acosta-Reyes F."/>
            <person name="Neupane R."/>
            <person name="Frank J."/>
            <person name="Fernandez I.S."/>
        </authorList>
    </citation>
    <scope>STRUCTURE BY ELECTRON MICROSCOPY (3.10 ANGSTROMS) OF RIBOSOME</scope>
    <scope>SUBUNIT</scope>
    <scope>SUBCELLULAR LOCATION</scope>
</reference>
<reference evidence="20 21" key="7">
    <citation type="journal article" date="2022" name="EMBO J.">
        <title>Molecular architecture of 40S translation initiation complexes on the hepatitis C virus IRES.</title>
        <authorList>
            <person name="Brown Z.P."/>
            <person name="Abaeva I.S."/>
            <person name="De S."/>
            <person name="Hellen C.U.T."/>
            <person name="Pestova T.V."/>
            <person name="Frank J."/>
        </authorList>
    </citation>
    <scope>STRUCTURE BY ELECTRON MICROSCOPY (3.50 ANGSTROMS) OF RIBOSOME</scope>
    <scope>SUBCELLULAR LOCATION</scope>
    <scope>SUBUNIT</scope>
</reference>
<reference evidence="22 23" key="8">
    <citation type="journal article" date="2022" name="Mol. Cell">
        <title>Direct epitranscriptomic regulation of mammalian translation initiation through N4-acetylcytidine.</title>
        <authorList>
            <person name="Arango D."/>
            <person name="Sturgill D."/>
            <person name="Yang R."/>
            <person name="Kanai T."/>
            <person name="Bauer P."/>
            <person name="Roy J."/>
            <person name="Wang Z."/>
            <person name="Hosogane M."/>
            <person name="Schiffers S."/>
            <person name="Oberdoerffer S."/>
        </authorList>
    </citation>
    <scope>STRUCTURE BY ELECTRON MICROSCOPY (2.80 ANGSTROMS) OF RIBOSOME</scope>
    <scope>SUBCELLULAR LOCATION</scope>
    <scope>SUBUNIT</scope>
</reference>
<gene>
    <name type="primary">RPS21</name>
</gene>
<feature type="chain" id="PRO_0000460073" description="Small ribosomal subunit protein eS21">
    <location>
        <begin position="1"/>
        <end position="83"/>
    </location>
</feature>
<feature type="modified residue" description="N-acetylmethionine" evidence="1">
    <location>
        <position position="1"/>
    </location>
</feature>
<feature type="cross-link" description="Glycyl lysine isopeptide (Lys-Gly) (interchain with G-Cter in SUMO2)" evidence="1">
    <location>
        <position position="41"/>
    </location>
</feature>
<feature type="turn" evidence="25">
    <location>
        <begin position="18"/>
        <end position="20"/>
    </location>
</feature>
<feature type="strand" evidence="24">
    <location>
        <begin position="32"/>
        <end position="39"/>
    </location>
</feature>
<feature type="strand" evidence="25">
    <location>
        <begin position="41"/>
        <end position="43"/>
    </location>
</feature>
<feature type="strand" evidence="24">
    <location>
        <begin position="46"/>
        <end position="55"/>
    </location>
</feature>
<feature type="helix" evidence="25">
    <location>
        <begin position="57"/>
        <end position="61"/>
    </location>
</feature>
<feature type="helix" evidence="25">
    <location>
        <begin position="65"/>
        <end position="74"/>
    </location>
</feature>
<feature type="turn" evidence="24">
    <location>
        <begin position="75"/>
        <end position="77"/>
    </location>
</feature>
<sequence length="83" mass="9127">MQNDAGEFVDLYVPRKCSASNRIIGAKDHASIQMNVAEVDKVTGRFNGQFKTYAICGAIRRMGESDDSILRLAKSDGIVSQNF</sequence>
<comment type="function">
    <text evidence="3 4 5">Component of the small ribosomal subunit (PubMed:23873042, PubMed:25601755, PubMed:26245381). The ribosome is a large ribonucleoprotein complex responsible for the synthesis of proteins in the cell (PubMed:23873042, PubMed:25601755, PubMed:26245381).</text>
</comment>
<comment type="subunit">
    <text evidence="3 4 5 6 7 8 9">Component of the 40S small ribosomal subunit.</text>
</comment>
<comment type="subcellular location">
    <subcellularLocation>
        <location evidence="1">Cytoplasm</location>
        <location evidence="1">Cytosol</location>
    </subcellularLocation>
    <subcellularLocation>
        <location evidence="3 4 5 6 7 8 9">Cytoplasm</location>
    </subcellularLocation>
    <subcellularLocation>
        <location evidence="2">Rough endoplasmic reticulum</location>
    </subcellularLocation>
    <text evidence="1 2">Detected on cytosolic polysomes (By similarity). Detected in ribosomes that are associated with the rough endoplasmic reticulum (By similarity).</text>
</comment>
<comment type="similarity">
    <text evidence="10">Belongs to the eukaryotic ribosomal protein eS21 family.</text>
</comment>
<proteinExistence type="evidence at protein level"/>
<name>RS21_RABIT</name>